<accession>B1JMK2</accession>
<organism>
    <name type="scientific">Yersinia pseudotuberculosis serotype O:3 (strain YPIII)</name>
    <dbReference type="NCBI Taxonomy" id="502800"/>
    <lineage>
        <taxon>Bacteria</taxon>
        <taxon>Pseudomonadati</taxon>
        <taxon>Pseudomonadota</taxon>
        <taxon>Gammaproteobacteria</taxon>
        <taxon>Enterobacterales</taxon>
        <taxon>Yersiniaceae</taxon>
        <taxon>Yersinia</taxon>
    </lineage>
</organism>
<protein>
    <recommendedName>
        <fullName evidence="1">Arginine repressor</fullName>
    </recommendedName>
</protein>
<evidence type="ECO:0000255" key="1">
    <source>
        <dbReference type="HAMAP-Rule" id="MF_00173"/>
    </source>
</evidence>
<feature type="chain" id="PRO_1000097897" description="Arginine repressor">
    <location>
        <begin position="1"/>
        <end position="156"/>
    </location>
</feature>
<dbReference type="EMBL" id="CP000950">
    <property type="protein sequence ID" value="ACA70029.1"/>
    <property type="molecule type" value="Genomic_DNA"/>
</dbReference>
<dbReference type="RefSeq" id="WP_002210173.1">
    <property type="nucleotide sequence ID" value="NZ_CP009792.1"/>
</dbReference>
<dbReference type="SMR" id="B1JMK2"/>
<dbReference type="GeneID" id="57975197"/>
<dbReference type="KEGG" id="ypy:YPK_3762"/>
<dbReference type="PATRIC" id="fig|502800.11.peg.112"/>
<dbReference type="UniPathway" id="UPA00068"/>
<dbReference type="GO" id="GO:0005737">
    <property type="term" value="C:cytoplasm"/>
    <property type="evidence" value="ECO:0007669"/>
    <property type="project" value="UniProtKB-SubCell"/>
</dbReference>
<dbReference type="GO" id="GO:0034618">
    <property type="term" value="F:arginine binding"/>
    <property type="evidence" value="ECO:0007669"/>
    <property type="project" value="InterPro"/>
</dbReference>
<dbReference type="GO" id="GO:0003677">
    <property type="term" value="F:DNA binding"/>
    <property type="evidence" value="ECO:0007669"/>
    <property type="project" value="UniProtKB-KW"/>
</dbReference>
<dbReference type="GO" id="GO:0003700">
    <property type="term" value="F:DNA-binding transcription factor activity"/>
    <property type="evidence" value="ECO:0007669"/>
    <property type="project" value="UniProtKB-UniRule"/>
</dbReference>
<dbReference type="GO" id="GO:0006526">
    <property type="term" value="P:L-arginine biosynthetic process"/>
    <property type="evidence" value="ECO:0007669"/>
    <property type="project" value="UniProtKB-UniPathway"/>
</dbReference>
<dbReference type="GO" id="GO:0051259">
    <property type="term" value="P:protein complex oligomerization"/>
    <property type="evidence" value="ECO:0007669"/>
    <property type="project" value="InterPro"/>
</dbReference>
<dbReference type="GO" id="GO:1900079">
    <property type="term" value="P:regulation of arginine biosynthetic process"/>
    <property type="evidence" value="ECO:0007669"/>
    <property type="project" value="UniProtKB-UniRule"/>
</dbReference>
<dbReference type="FunFam" id="1.10.10.10:FF:000074">
    <property type="entry name" value="Arginine repressor"/>
    <property type="match status" value="1"/>
</dbReference>
<dbReference type="FunFam" id="3.30.1360.40:FF:000004">
    <property type="entry name" value="Arginine repressor"/>
    <property type="match status" value="1"/>
</dbReference>
<dbReference type="Gene3D" id="3.30.1360.40">
    <property type="match status" value="1"/>
</dbReference>
<dbReference type="Gene3D" id="1.10.10.10">
    <property type="entry name" value="Winged helix-like DNA-binding domain superfamily/Winged helix DNA-binding domain"/>
    <property type="match status" value="1"/>
</dbReference>
<dbReference type="HAMAP" id="MF_00173">
    <property type="entry name" value="Arg_repressor"/>
    <property type="match status" value="1"/>
</dbReference>
<dbReference type="InterPro" id="IPR001669">
    <property type="entry name" value="Arg_repress"/>
</dbReference>
<dbReference type="InterPro" id="IPR020899">
    <property type="entry name" value="Arg_repress_C"/>
</dbReference>
<dbReference type="InterPro" id="IPR036251">
    <property type="entry name" value="Arg_repress_C_sf"/>
</dbReference>
<dbReference type="InterPro" id="IPR020900">
    <property type="entry name" value="Arg_repress_DNA-bd"/>
</dbReference>
<dbReference type="InterPro" id="IPR036388">
    <property type="entry name" value="WH-like_DNA-bd_sf"/>
</dbReference>
<dbReference type="InterPro" id="IPR036390">
    <property type="entry name" value="WH_DNA-bd_sf"/>
</dbReference>
<dbReference type="NCBIfam" id="TIGR01529">
    <property type="entry name" value="argR_whole"/>
    <property type="match status" value="1"/>
</dbReference>
<dbReference type="NCBIfam" id="NF003457">
    <property type="entry name" value="PRK05066.1"/>
    <property type="match status" value="1"/>
</dbReference>
<dbReference type="PANTHER" id="PTHR34471">
    <property type="entry name" value="ARGININE REPRESSOR"/>
    <property type="match status" value="1"/>
</dbReference>
<dbReference type="PANTHER" id="PTHR34471:SF1">
    <property type="entry name" value="ARGININE REPRESSOR"/>
    <property type="match status" value="1"/>
</dbReference>
<dbReference type="Pfam" id="PF01316">
    <property type="entry name" value="Arg_repressor"/>
    <property type="match status" value="1"/>
</dbReference>
<dbReference type="Pfam" id="PF02863">
    <property type="entry name" value="Arg_repressor_C"/>
    <property type="match status" value="1"/>
</dbReference>
<dbReference type="PRINTS" id="PR01467">
    <property type="entry name" value="ARGREPRESSOR"/>
</dbReference>
<dbReference type="SUPFAM" id="SSF55252">
    <property type="entry name" value="C-terminal domain of arginine repressor"/>
    <property type="match status" value="1"/>
</dbReference>
<dbReference type="SUPFAM" id="SSF46785">
    <property type="entry name" value="Winged helix' DNA-binding domain"/>
    <property type="match status" value="1"/>
</dbReference>
<name>ARGR_YERPY</name>
<reference key="1">
    <citation type="submission" date="2008-02" db="EMBL/GenBank/DDBJ databases">
        <title>Complete sequence of Yersinia pseudotuberculosis YPIII.</title>
        <authorList>
            <consortium name="US DOE Joint Genome Institute"/>
            <person name="Copeland A."/>
            <person name="Lucas S."/>
            <person name="Lapidus A."/>
            <person name="Glavina del Rio T."/>
            <person name="Dalin E."/>
            <person name="Tice H."/>
            <person name="Bruce D."/>
            <person name="Goodwin L."/>
            <person name="Pitluck S."/>
            <person name="Munk A.C."/>
            <person name="Brettin T."/>
            <person name="Detter J.C."/>
            <person name="Han C."/>
            <person name="Tapia R."/>
            <person name="Schmutz J."/>
            <person name="Larimer F."/>
            <person name="Land M."/>
            <person name="Hauser L."/>
            <person name="Challacombe J.F."/>
            <person name="Green L."/>
            <person name="Lindler L.E."/>
            <person name="Nikolich M.P."/>
            <person name="Richardson P."/>
        </authorList>
    </citation>
    <scope>NUCLEOTIDE SEQUENCE [LARGE SCALE GENOMIC DNA]</scope>
    <source>
        <strain>YPIII</strain>
    </source>
</reference>
<proteinExistence type="inferred from homology"/>
<comment type="function">
    <text evidence="1">Regulates arginine biosynthesis genes.</text>
</comment>
<comment type="pathway">
    <text>Amino-acid biosynthesis; L-arginine biosynthesis [regulation].</text>
</comment>
<comment type="subcellular location">
    <subcellularLocation>
        <location evidence="1">Cytoplasm</location>
    </subcellularLocation>
</comment>
<comment type="similarity">
    <text evidence="1">Belongs to the ArgR family.</text>
</comment>
<sequence>MRNPAKQEDLIKAFKALLKEEKFSSQGEIVLALQEEGFENINQSKVSRMLTKFGAVRTRNAKMEMVYCLPAELGVPTTSSPLKNLVLDVDYNDSVVVINTSPGAAQLIARLLDSLGKAEGILGSIAGDDTIFTTPARGFTVKQLHEAILRLFEQEL</sequence>
<keyword id="KW-0028">Amino-acid biosynthesis</keyword>
<keyword id="KW-0055">Arginine biosynthesis</keyword>
<keyword id="KW-0963">Cytoplasm</keyword>
<keyword id="KW-0238">DNA-binding</keyword>
<keyword id="KW-0678">Repressor</keyword>
<keyword id="KW-0804">Transcription</keyword>
<keyword id="KW-0805">Transcription regulation</keyword>
<gene>
    <name evidence="1" type="primary">argR</name>
    <name type="ordered locus">YPK_3762</name>
</gene>